<reference key="1">
    <citation type="journal article" date="2011" name="MBio">
        <title>Novel metabolic attributes of the genus Cyanothece, comprising a group of unicellular nitrogen-fixing Cyanobacteria.</title>
        <authorList>
            <person name="Bandyopadhyay A."/>
            <person name="Elvitigala T."/>
            <person name="Welsh E."/>
            <person name="Stockel J."/>
            <person name="Liberton M."/>
            <person name="Min H."/>
            <person name="Sherman L.A."/>
            <person name="Pakrasi H.B."/>
        </authorList>
    </citation>
    <scope>NUCLEOTIDE SEQUENCE [LARGE SCALE GENOMIC DNA]</scope>
    <source>
        <strain>PCC 8801 / RF-1</strain>
    </source>
</reference>
<sequence>MIGTNVAPRHENWLQVVKSYYQLTKPRIIPLLLITTAAAMWIASEGRVDLFTLFITLIGGTLAAAAAQVMNCIYDRDIDYEMLRTRARPIPSGRVQSRHAFIFAVILAILSFSLFALFVNLLSGLLAMSGIVFYMLVYTHLLKRNSPQNIVIGGAAGSIPPLVGWAAVTGDLGWAPWILFAIIFLWTPPHFWALALMIKDDYAQVNVPMMPVVEGEESTVRQIWWYTLLMIPCTFLLVYPLGVSGAVYGGIAIILGAMFIQKAWQLKQAPFDQVLARSLFKFSIFYLMLLCTAMVIDSLPLTHQVMVALGDNLNLLLSLIPLN</sequence>
<accession>B7K336</accession>
<name>COXX_RIPO1</name>
<keyword id="KW-0997">Cell inner membrane</keyword>
<keyword id="KW-1003">Cell membrane</keyword>
<keyword id="KW-0350">Heme biosynthesis</keyword>
<keyword id="KW-0472">Membrane</keyword>
<keyword id="KW-1185">Reference proteome</keyword>
<keyword id="KW-0808">Transferase</keyword>
<keyword id="KW-0812">Transmembrane</keyword>
<keyword id="KW-1133">Transmembrane helix</keyword>
<organism>
    <name type="scientific">Rippkaea orientalis (strain PCC 8801 / RF-1)</name>
    <name type="common">Cyanothece sp. (strain PCC 8801)</name>
    <dbReference type="NCBI Taxonomy" id="41431"/>
    <lineage>
        <taxon>Bacteria</taxon>
        <taxon>Bacillati</taxon>
        <taxon>Cyanobacteriota</taxon>
        <taxon>Cyanophyceae</taxon>
        <taxon>Oscillatoriophycideae</taxon>
        <taxon>Chroococcales</taxon>
        <taxon>Aphanothecaceae</taxon>
        <taxon>Rippkaea</taxon>
        <taxon>Rippkaea orientalis</taxon>
    </lineage>
</organism>
<gene>
    <name evidence="1" type="primary">ctaB</name>
    <name type="ordered locus">PCC8801_0255</name>
</gene>
<feature type="chain" id="PRO_1000199650" description="Protoheme IX farnesyltransferase">
    <location>
        <begin position="1"/>
        <end position="323"/>
    </location>
</feature>
<feature type="transmembrane region" description="Helical" evidence="1">
    <location>
        <begin position="28"/>
        <end position="48"/>
    </location>
</feature>
<feature type="transmembrane region" description="Helical" evidence="1">
    <location>
        <begin position="50"/>
        <end position="70"/>
    </location>
</feature>
<feature type="transmembrane region" description="Helical" evidence="1">
    <location>
        <begin position="101"/>
        <end position="121"/>
    </location>
</feature>
<feature type="transmembrane region" description="Helical" evidence="1">
    <location>
        <begin position="122"/>
        <end position="142"/>
    </location>
</feature>
<feature type="transmembrane region" description="Helical" evidence="1">
    <location>
        <begin position="150"/>
        <end position="170"/>
    </location>
</feature>
<feature type="transmembrane region" description="Helical" evidence="1">
    <location>
        <begin position="178"/>
        <end position="198"/>
    </location>
</feature>
<feature type="transmembrane region" description="Helical" evidence="1">
    <location>
        <begin position="235"/>
        <end position="255"/>
    </location>
</feature>
<feature type="transmembrane region" description="Helical" evidence="1">
    <location>
        <begin position="282"/>
        <end position="302"/>
    </location>
</feature>
<comment type="function">
    <text evidence="1">Converts heme B (protoheme IX) to heme O by substitution of the vinyl group on carbon 2 of heme B porphyrin ring with a hydroxyethyl farnesyl side group.</text>
</comment>
<comment type="catalytic activity">
    <reaction evidence="1">
        <text>heme b + (2E,6E)-farnesyl diphosphate + H2O = Fe(II)-heme o + diphosphate</text>
        <dbReference type="Rhea" id="RHEA:28070"/>
        <dbReference type="ChEBI" id="CHEBI:15377"/>
        <dbReference type="ChEBI" id="CHEBI:33019"/>
        <dbReference type="ChEBI" id="CHEBI:60344"/>
        <dbReference type="ChEBI" id="CHEBI:60530"/>
        <dbReference type="ChEBI" id="CHEBI:175763"/>
        <dbReference type="EC" id="2.5.1.141"/>
    </reaction>
</comment>
<comment type="pathway">
    <text evidence="1">Porphyrin-containing compound metabolism; heme O biosynthesis; heme O from protoheme: step 1/1.</text>
</comment>
<comment type="subcellular location">
    <subcellularLocation>
        <location evidence="1">Cell inner membrane</location>
        <topology evidence="1">Multi-pass membrane protein</topology>
    </subcellularLocation>
</comment>
<comment type="miscellaneous">
    <text evidence="1">Carbon 2 of the heme B porphyrin ring is defined according to the Fischer nomenclature.</text>
</comment>
<comment type="similarity">
    <text evidence="1">Belongs to the UbiA prenyltransferase family. Protoheme IX farnesyltransferase subfamily.</text>
</comment>
<dbReference type="EC" id="2.5.1.141" evidence="1"/>
<dbReference type="EMBL" id="CP001287">
    <property type="protein sequence ID" value="ACK64356.1"/>
    <property type="molecule type" value="Genomic_DNA"/>
</dbReference>
<dbReference type="RefSeq" id="WP_012593633.1">
    <property type="nucleotide sequence ID" value="NC_011726.1"/>
</dbReference>
<dbReference type="SMR" id="B7K336"/>
<dbReference type="STRING" id="41431.PCC8801_0255"/>
<dbReference type="KEGG" id="cyp:PCC8801_0255"/>
<dbReference type="eggNOG" id="COG0109">
    <property type="taxonomic scope" value="Bacteria"/>
</dbReference>
<dbReference type="HOGENOM" id="CLU_029631_0_2_3"/>
<dbReference type="OrthoDB" id="9814417at2"/>
<dbReference type="UniPathway" id="UPA00834">
    <property type="reaction ID" value="UER00712"/>
</dbReference>
<dbReference type="Proteomes" id="UP000008204">
    <property type="component" value="Chromosome"/>
</dbReference>
<dbReference type="GO" id="GO:0005886">
    <property type="term" value="C:plasma membrane"/>
    <property type="evidence" value="ECO:0007669"/>
    <property type="project" value="UniProtKB-SubCell"/>
</dbReference>
<dbReference type="GO" id="GO:0008495">
    <property type="term" value="F:protoheme IX farnesyltransferase activity"/>
    <property type="evidence" value="ECO:0007669"/>
    <property type="project" value="UniProtKB-UniRule"/>
</dbReference>
<dbReference type="GO" id="GO:0048034">
    <property type="term" value="P:heme O biosynthetic process"/>
    <property type="evidence" value="ECO:0007669"/>
    <property type="project" value="UniProtKB-UniRule"/>
</dbReference>
<dbReference type="CDD" id="cd13957">
    <property type="entry name" value="PT_UbiA_Cox10"/>
    <property type="match status" value="1"/>
</dbReference>
<dbReference type="FunFam" id="1.10.357.140:FF:000001">
    <property type="entry name" value="Protoheme IX farnesyltransferase"/>
    <property type="match status" value="1"/>
</dbReference>
<dbReference type="Gene3D" id="1.10.357.140">
    <property type="entry name" value="UbiA prenyltransferase"/>
    <property type="match status" value="1"/>
</dbReference>
<dbReference type="HAMAP" id="MF_00154">
    <property type="entry name" value="CyoE_CtaB"/>
    <property type="match status" value="1"/>
</dbReference>
<dbReference type="InterPro" id="IPR006369">
    <property type="entry name" value="Protohaem_IX_farnesylTrfase"/>
</dbReference>
<dbReference type="InterPro" id="IPR000537">
    <property type="entry name" value="UbiA_prenyltransferase"/>
</dbReference>
<dbReference type="InterPro" id="IPR030470">
    <property type="entry name" value="UbiA_prenylTrfase_CS"/>
</dbReference>
<dbReference type="InterPro" id="IPR044878">
    <property type="entry name" value="UbiA_sf"/>
</dbReference>
<dbReference type="NCBIfam" id="TIGR01473">
    <property type="entry name" value="cyoE_ctaB"/>
    <property type="match status" value="1"/>
</dbReference>
<dbReference type="NCBIfam" id="NF003349">
    <property type="entry name" value="PRK04375.1-2"/>
    <property type="match status" value="1"/>
</dbReference>
<dbReference type="PANTHER" id="PTHR43448:SF7">
    <property type="entry name" value="4-HYDROXYBENZOATE SOLANESYLTRANSFERASE"/>
    <property type="match status" value="1"/>
</dbReference>
<dbReference type="PANTHER" id="PTHR43448">
    <property type="entry name" value="PROTOHEME IX FARNESYLTRANSFERASE, MITOCHONDRIAL"/>
    <property type="match status" value="1"/>
</dbReference>
<dbReference type="Pfam" id="PF01040">
    <property type="entry name" value="UbiA"/>
    <property type="match status" value="1"/>
</dbReference>
<dbReference type="PROSITE" id="PS00943">
    <property type="entry name" value="UBIA"/>
    <property type="match status" value="1"/>
</dbReference>
<proteinExistence type="inferred from homology"/>
<evidence type="ECO:0000255" key="1">
    <source>
        <dbReference type="HAMAP-Rule" id="MF_00154"/>
    </source>
</evidence>
<protein>
    <recommendedName>
        <fullName evidence="1">Protoheme IX farnesyltransferase</fullName>
        <ecNumber evidence="1">2.5.1.141</ecNumber>
    </recommendedName>
    <alternativeName>
        <fullName evidence="1">Heme B farnesyltransferase</fullName>
    </alternativeName>
    <alternativeName>
        <fullName evidence="1">Heme O synthase</fullName>
    </alternativeName>
</protein>